<comment type="function">
    <text>Required for efficient passage of the G1/S transition.</text>
</comment>
<comment type="similarity">
    <text evidence="3">Belongs to the cyclin family. Cyclin G subfamily.</text>
</comment>
<keyword id="KW-0131">Cell cycle</keyword>
<keyword id="KW-0132">Cell division</keyword>
<keyword id="KW-0195">Cyclin</keyword>
<keyword id="KW-0498">Mitosis</keyword>
<keyword id="KW-0597">Phosphoprotein</keyword>
<keyword id="KW-1185">Reference proteome</keyword>
<sequence>MDVSTQTRHATYFQDENQLQKDHIYVKKKSHIKLNTGVRAPFKAVDNINQQDEPTLIEGNNESSISSSTGDTFEEDFAYQDKVEIEERSIRSTPKSIGDDDLENREGSFDAPEGILTHGKHRLPTIPEWTKEDLAALSEAAARLQANPSPEDIETDPSMVPDYDPEIFHYMQSLERKLAPPPNYMSVQQEIDWVTRHMLVDWIVQVQIHFRLLPETLFLAVNLIDRFLSIKVVSLQKVQLVGLSALLIACKYEEIHPPSIYNFAHVVQGIFTVDEIIRAERYMLMLLDFDISWPGPMSFLRRISRADSYDHDIRMLAKYLQEVTLMDEIFIGAHISFIAATAYYLSMQMLGHLDWTPCHVYYSGYTARQLKPCAIIIMECLVDAPNHHNAIYRKYSENRMKRVSAFAHNWVLSVI</sequence>
<reference key="1">
    <citation type="journal article" date="1991" name="Cell">
        <title>A fission yeast B-type cyclin functioning early in the cell cycle.</title>
        <authorList>
            <person name="Bueno A."/>
            <person name="Richardson H.E."/>
            <person name="Reed S.I."/>
            <person name="Russell P."/>
        </authorList>
    </citation>
    <scope>NUCLEOTIDE SEQUENCE [GENOMIC DNA]</scope>
</reference>
<reference key="2">
    <citation type="journal article" date="2002" name="Nature">
        <title>The genome sequence of Schizosaccharomyces pombe.</title>
        <authorList>
            <person name="Wood V."/>
            <person name="Gwilliam R."/>
            <person name="Rajandream M.A."/>
            <person name="Lyne M.H."/>
            <person name="Lyne R."/>
            <person name="Stewart A."/>
            <person name="Sgouros J.G."/>
            <person name="Peat N."/>
            <person name="Hayles J."/>
            <person name="Baker S.G."/>
            <person name="Basham D."/>
            <person name="Bowman S."/>
            <person name="Brooks K."/>
            <person name="Brown D."/>
            <person name="Brown S."/>
            <person name="Chillingworth T."/>
            <person name="Churcher C.M."/>
            <person name="Collins M."/>
            <person name="Connor R."/>
            <person name="Cronin A."/>
            <person name="Davis P."/>
            <person name="Feltwell T."/>
            <person name="Fraser A."/>
            <person name="Gentles S."/>
            <person name="Goble A."/>
            <person name="Hamlin N."/>
            <person name="Harris D.E."/>
            <person name="Hidalgo J."/>
            <person name="Hodgson G."/>
            <person name="Holroyd S."/>
            <person name="Hornsby T."/>
            <person name="Howarth S."/>
            <person name="Huckle E.J."/>
            <person name="Hunt S."/>
            <person name="Jagels K."/>
            <person name="James K.D."/>
            <person name="Jones L."/>
            <person name="Jones M."/>
            <person name="Leather S."/>
            <person name="McDonald S."/>
            <person name="McLean J."/>
            <person name="Mooney P."/>
            <person name="Moule S."/>
            <person name="Mungall K.L."/>
            <person name="Murphy L.D."/>
            <person name="Niblett D."/>
            <person name="Odell C."/>
            <person name="Oliver K."/>
            <person name="O'Neil S."/>
            <person name="Pearson D."/>
            <person name="Quail M.A."/>
            <person name="Rabbinowitsch E."/>
            <person name="Rutherford K.M."/>
            <person name="Rutter S."/>
            <person name="Saunders D."/>
            <person name="Seeger K."/>
            <person name="Sharp S."/>
            <person name="Skelton J."/>
            <person name="Simmonds M.N."/>
            <person name="Squares R."/>
            <person name="Squares S."/>
            <person name="Stevens K."/>
            <person name="Taylor K."/>
            <person name="Taylor R.G."/>
            <person name="Tivey A."/>
            <person name="Walsh S.V."/>
            <person name="Warren T."/>
            <person name="Whitehead S."/>
            <person name="Woodward J.R."/>
            <person name="Volckaert G."/>
            <person name="Aert R."/>
            <person name="Robben J."/>
            <person name="Grymonprez B."/>
            <person name="Weltjens I."/>
            <person name="Vanstreels E."/>
            <person name="Rieger M."/>
            <person name="Schaefer M."/>
            <person name="Mueller-Auer S."/>
            <person name="Gabel C."/>
            <person name="Fuchs M."/>
            <person name="Duesterhoeft A."/>
            <person name="Fritzc C."/>
            <person name="Holzer E."/>
            <person name="Moestl D."/>
            <person name="Hilbert H."/>
            <person name="Borzym K."/>
            <person name="Langer I."/>
            <person name="Beck A."/>
            <person name="Lehrach H."/>
            <person name="Reinhardt R."/>
            <person name="Pohl T.M."/>
            <person name="Eger P."/>
            <person name="Zimmermann W."/>
            <person name="Wedler H."/>
            <person name="Wambutt R."/>
            <person name="Purnelle B."/>
            <person name="Goffeau A."/>
            <person name="Cadieu E."/>
            <person name="Dreano S."/>
            <person name="Gloux S."/>
            <person name="Lelaure V."/>
            <person name="Mottier S."/>
            <person name="Galibert F."/>
            <person name="Aves S.J."/>
            <person name="Xiang Z."/>
            <person name="Hunt C."/>
            <person name="Moore K."/>
            <person name="Hurst S.M."/>
            <person name="Lucas M."/>
            <person name="Rochet M."/>
            <person name="Gaillardin C."/>
            <person name="Tallada V.A."/>
            <person name="Garzon A."/>
            <person name="Thode G."/>
            <person name="Daga R.R."/>
            <person name="Cruzado L."/>
            <person name="Jimenez J."/>
            <person name="Sanchez M."/>
            <person name="del Rey F."/>
            <person name="Benito J."/>
            <person name="Dominguez A."/>
            <person name="Revuelta J.L."/>
            <person name="Moreno S."/>
            <person name="Armstrong J."/>
            <person name="Forsburg S.L."/>
            <person name="Cerutti L."/>
            <person name="Lowe T."/>
            <person name="McCombie W.R."/>
            <person name="Paulsen I."/>
            <person name="Potashkin J."/>
            <person name="Shpakovski G.V."/>
            <person name="Ussery D."/>
            <person name="Barrell B.G."/>
            <person name="Nurse P."/>
        </authorList>
    </citation>
    <scope>NUCLEOTIDE SEQUENCE [LARGE SCALE GENOMIC DNA]</scope>
    <source>
        <strain>972 / ATCC 24843</strain>
    </source>
</reference>
<reference key="3">
    <citation type="journal article" date="2008" name="J. Proteome Res.">
        <title>Phosphoproteome analysis of fission yeast.</title>
        <authorList>
            <person name="Wilson-Grady J.T."/>
            <person name="Villen J."/>
            <person name="Gygi S.P."/>
        </authorList>
    </citation>
    <scope>PHOSPHORYLATION [LARGE SCALE ANALYSIS] AT SER-96</scope>
    <scope>IDENTIFICATION BY MASS SPECTROMETRY</scope>
</reference>
<dbReference type="EMBL" id="M68881">
    <property type="protein sequence ID" value="AAA35288.1"/>
    <property type="molecule type" value="Genomic_DNA"/>
</dbReference>
<dbReference type="EMBL" id="CU329672">
    <property type="protein sequence ID" value="CAB57300.2"/>
    <property type="molecule type" value="Genomic_DNA"/>
</dbReference>
<dbReference type="PIR" id="T41518">
    <property type="entry name" value="T41518"/>
</dbReference>
<dbReference type="RefSeq" id="NP_588110.2">
    <property type="nucleotide sequence ID" value="NM_001023100.2"/>
</dbReference>
<dbReference type="SMR" id="P24865"/>
<dbReference type="BioGRID" id="275996">
    <property type="interactions" value="10"/>
</dbReference>
<dbReference type="FunCoup" id="P24865">
    <property type="interactions" value="466"/>
</dbReference>
<dbReference type="STRING" id="284812.P24865"/>
<dbReference type="iPTMnet" id="P24865"/>
<dbReference type="PaxDb" id="4896-SPCC4E9.02.1"/>
<dbReference type="EnsemblFungi" id="SPCC4E9.02.1">
    <property type="protein sequence ID" value="SPCC4E9.02.1:pep"/>
    <property type="gene ID" value="SPCC4E9.02"/>
</dbReference>
<dbReference type="GeneID" id="2539433"/>
<dbReference type="KEGG" id="spo:2539433"/>
<dbReference type="PomBase" id="SPCC4E9.02">
    <property type="gene designation" value="cig1"/>
</dbReference>
<dbReference type="VEuPathDB" id="FungiDB:SPCC4E9.02"/>
<dbReference type="eggNOG" id="KOG0653">
    <property type="taxonomic scope" value="Eukaryota"/>
</dbReference>
<dbReference type="HOGENOM" id="CLU_020695_10_6_1"/>
<dbReference type="InParanoid" id="P24865"/>
<dbReference type="OMA" id="CYITENT"/>
<dbReference type="PhylomeDB" id="P24865"/>
<dbReference type="PRO" id="PR:P24865"/>
<dbReference type="Proteomes" id="UP000002485">
    <property type="component" value="Chromosome III"/>
</dbReference>
<dbReference type="GO" id="GO:0000307">
    <property type="term" value="C:cyclin-dependent protein kinase holoenzyme complex"/>
    <property type="evidence" value="ECO:0000318"/>
    <property type="project" value="GO_Central"/>
</dbReference>
<dbReference type="GO" id="GO:0005737">
    <property type="term" value="C:cytoplasm"/>
    <property type="evidence" value="ECO:0000318"/>
    <property type="project" value="GO_Central"/>
</dbReference>
<dbReference type="GO" id="GO:0005815">
    <property type="term" value="C:microtubule organizing center"/>
    <property type="evidence" value="ECO:0000318"/>
    <property type="project" value="GO_Central"/>
</dbReference>
<dbReference type="GO" id="GO:0005634">
    <property type="term" value="C:nucleus"/>
    <property type="evidence" value="ECO:0000318"/>
    <property type="project" value="GO_Central"/>
</dbReference>
<dbReference type="GO" id="GO:0061575">
    <property type="term" value="F:cyclin-dependent protein serine/threonine kinase activator activity"/>
    <property type="evidence" value="ECO:0000269"/>
    <property type="project" value="PomBase"/>
</dbReference>
<dbReference type="GO" id="GO:0016538">
    <property type="term" value="F:cyclin-dependent protein serine/threonine kinase regulator activity"/>
    <property type="evidence" value="ECO:0000318"/>
    <property type="project" value="GO_Central"/>
</dbReference>
<dbReference type="GO" id="GO:0051301">
    <property type="term" value="P:cell division"/>
    <property type="evidence" value="ECO:0007669"/>
    <property type="project" value="UniProtKB-KW"/>
</dbReference>
<dbReference type="GO" id="GO:0006310">
    <property type="term" value="P:DNA recombination"/>
    <property type="evidence" value="ECO:0000315"/>
    <property type="project" value="PomBase"/>
</dbReference>
<dbReference type="GO" id="GO:0000082">
    <property type="term" value="P:G1/S transition of mitotic cell cycle"/>
    <property type="evidence" value="ECO:0000318"/>
    <property type="project" value="GO_Central"/>
</dbReference>
<dbReference type="GO" id="GO:1900087">
    <property type="term" value="P:positive regulation of G1/S transition of mitotic cell cycle"/>
    <property type="evidence" value="ECO:0000315"/>
    <property type="project" value="PomBase"/>
</dbReference>
<dbReference type="GO" id="GO:0032436">
    <property type="term" value="P:positive regulation of proteasomal ubiquitin-dependent protein catabolic process"/>
    <property type="evidence" value="ECO:0000315"/>
    <property type="project" value="PomBase"/>
</dbReference>
<dbReference type="GO" id="GO:2000045">
    <property type="term" value="P:regulation of G1/S transition of mitotic cell cycle"/>
    <property type="evidence" value="ECO:0000315"/>
    <property type="project" value="PomBase"/>
</dbReference>
<dbReference type="CDD" id="cd20568">
    <property type="entry name" value="CYCLIN_CLBs_yeast_rpt1"/>
    <property type="match status" value="1"/>
</dbReference>
<dbReference type="CDD" id="cd20512">
    <property type="entry name" value="CYCLIN_CLBs_yeast_rpt2"/>
    <property type="match status" value="1"/>
</dbReference>
<dbReference type="FunFam" id="1.10.472.10:FF:000001">
    <property type="entry name" value="G2/mitotic-specific cyclin"/>
    <property type="match status" value="1"/>
</dbReference>
<dbReference type="Gene3D" id="1.10.472.10">
    <property type="entry name" value="Cyclin-like"/>
    <property type="match status" value="2"/>
</dbReference>
<dbReference type="InterPro" id="IPR039361">
    <property type="entry name" value="Cyclin"/>
</dbReference>
<dbReference type="InterPro" id="IPR013763">
    <property type="entry name" value="Cyclin-like_dom"/>
</dbReference>
<dbReference type="InterPro" id="IPR036915">
    <property type="entry name" value="Cyclin-like_sf"/>
</dbReference>
<dbReference type="InterPro" id="IPR004367">
    <property type="entry name" value="Cyclin_C-dom"/>
</dbReference>
<dbReference type="InterPro" id="IPR006671">
    <property type="entry name" value="Cyclin_N"/>
</dbReference>
<dbReference type="InterPro" id="IPR048258">
    <property type="entry name" value="Cyclins_cyclin-box"/>
</dbReference>
<dbReference type="PANTHER" id="PTHR10177">
    <property type="entry name" value="CYCLINS"/>
    <property type="match status" value="1"/>
</dbReference>
<dbReference type="Pfam" id="PF02984">
    <property type="entry name" value="Cyclin_C"/>
    <property type="match status" value="1"/>
</dbReference>
<dbReference type="Pfam" id="PF00134">
    <property type="entry name" value="Cyclin_N"/>
    <property type="match status" value="1"/>
</dbReference>
<dbReference type="SMART" id="SM00385">
    <property type="entry name" value="CYCLIN"/>
    <property type="match status" value="2"/>
</dbReference>
<dbReference type="SMART" id="SM01332">
    <property type="entry name" value="Cyclin_C"/>
    <property type="match status" value="1"/>
</dbReference>
<dbReference type="SUPFAM" id="SSF47954">
    <property type="entry name" value="Cyclin-like"/>
    <property type="match status" value="2"/>
</dbReference>
<dbReference type="PROSITE" id="PS00292">
    <property type="entry name" value="CYCLINS"/>
    <property type="match status" value="1"/>
</dbReference>
<organism>
    <name type="scientific">Schizosaccharomyces pombe (strain 972 / ATCC 24843)</name>
    <name type="common">Fission yeast</name>
    <dbReference type="NCBI Taxonomy" id="284812"/>
    <lineage>
        <taxon>Eukaryota</taxon>
        <taxon>Fungi</taxon>
        <taxon>Dikarya</taxon>
        <taxon>Ascomycota</taxon>
        <taxon>Taphrinomycotina</taxon>
        <taxon>Schizosaccharomycetes</taxon>
        <taxon>Schizosaccharomycetales</taxon>
        <taxon>Schizosaccharomycetaceae</taxon>
        <taxon>Schizosaccharomyces</taxon>
    </lineage>
</organism>
<name>CG21_SCHPO</name>
<gene>
    <name type="primary">cig1</name>
    <name type="ORF">SPCC4E9.02</name>
    <name type="ORF">SPCC645.01</name>
</gene>
<accession>P24865</accession>
<accession>Q9USI7</accession>
<accession>Q9USI9</accession>
<proteinExistence type="evidence at protein level"/>
<protein>
    <recommendedName>
        <fullName>G2/mitotic-specific cyclin cig1</fullName>
    </recommendedName>
</protein>
<feature type="chain" id="PRO_0000080400" description="G2/mitotic-specific cyclin cig1">
    <location>
        <begin position="1"/>
        <end position="415"/>
    </location>
</feature>
<feature type="region of interest" description="Disordered" evidence="1">
    <location>
        <begin position="54"/>
        <end position="74"/>
    </location>
</feature>
<feature type="region of interest" description="Disordered" evidence="1">
    <location>
        <begin position="86"/>
        <end position="118"/>
    </location>
</feature>
<feature type="compositionally biased region" description="Low complexity" evidence="1">
    <location>
        <begin position="57"/>
        <end position="71"/>
    </location>
</feature>
<feature type="modified residue" description="Phosphoserine" evidence="2">
    <location>
        <position position="96"/>
    </location>
</feature>
<feature type="sequence conflict" description="In Ref. 1; AAA35288." evidence="3" ref="1">
    <original>R</original>
    <variation>P</variation>
    <location>
        <position position="39"/>
    </location>
</feature>
<feature type="sequence conflict" description="In Ref. 1; AAA35288." evidence="3" ref="1">
    <original>D</original>
    <variation>H</variation>
    <location>
        <position position="307"/>
    </location>
</feature>
<feature type="sequence conflict" description="In Ref. 1; AAA35288." evidence="3" ref="1">
    <original>I</original>
    <variation>N</variation>
    <location>
        <position position="375"/>
    </location>
</feature>
<feature type="sequence conflict" description="In Ref. 1; AAA35288." evidence="3" ref="1">
    <original>M</original>
    <variation>W</variation>
    <location>
        <position position="378"/>
    </location>
</feature>
<evidence type="ECO:0000256" key="1">
    <source>
        <dbReference type="SAM" id="MobiDB-lite"/>
    </source>
</evidence>
<evidence type="ECO:0000269" key="2">
    <source>
    </source>
</evidence>
<evidence type="ECO:0000305" key="3"/>